<evidence type="ECO:0000250" key="1"/>
<evidence type="ECO:0000256" key="2">
    <source>
        <dbReference type="SAM" id="MobiDB-lite"/>
    </source>
</evidence>
<evidence type="ECO:0000305" key="3"/>
<reference key="1">
    <citation type="journal article" date="2004" name="Nature">
        <title>Genome evolution in yeasts.</title>
        <authorList>
            <person name="Dujon B."/>
            <person name="Sherman D."/>
            <person name="Fischer G."/>
            <person name="Durrens P."/>
            <person name="Casaregola S."/>
            <person name="Lafontaine I."/>
            <person name="de Montigny J."/>
            <person name="Marck C."/>
            <person name="Neuveglise C."/>
            <person name="Talla E."/>
            <person name="Goffard N."/>
            <person name="Frangeul L."/>
            <person name="Aigle M."/>
            <person name="Anthouard V."/>
            <person name="Babour A."/>
            <person name="Barbe V."/>
            <person name="Barnay S."/>
            <person name="Blanchin S."/>
            <person name="Beckerich J.-M."/>
            <person name="Beyne E."/>
            <person name="Bleykasten C."/>
            <person name="Boisrame A."/>
            <person name="Boyer J."/>
            <person name="Cattolico L."/>
            <person name="Confanioleri F."/>
            <person name="de Daruvar A."/>
            <person name="Despons L."/>
            <person name="Fabre E."/>
            <person name="Fairhead C."/>
            <person name="Ferry-Dumazet H."/>
            <person name="Groppi A."/>
            <person name="Hantraye F."/>
            <person name="Hennequin C."/>
            <person name="Jauniaux N."/>
            <person name="Joyet P."/>
            <person name="Kachouri R."/>
            <person name="Kerrest A."/>
            <person name="Koszul R."/>
            <person name="Lemaire M."/>
            <person name="Lesur I."/>
            <person name="Ma L."/>
            <person name="Muller H."/>
            <person name="Nicaud J.-M."/>
            <person name="Nikolski M."/>
            <person name="Oztas S."/>
            <person name="Ozier-Kalogeropoulos O."/>
            <person name="Pellenz S."/>
            <person name="Potier S."/>
            <person name="Richard G.-F."/>
            <person name="Straub M.-L."/>
            <person name="Suleau A."/>
            <person name="Swennen D."/>
            <person name="Tekaia F."/>
            <person name="Wesolowski-Louvel M."/>
            <person name="Westhof E."/>
            <person name="Wirth B."/>
            <person name="Zeniou-Meyer M."/>
            <person name="Zivanovic Y."/>
            <person name="Bolotin-Fukuhara M."/>
            <person name="Thierry A."/>
            <person name="Bouchier C."/>
            <person name="Caudron B."/>
            <person name="Scarpelli C."/>
            <person name="Gaillardin C."/>
            <person name="Weissenbach J."/>
            <person name="Wincker P."/>
            <person name="Souciet J.-L."/>
        </authorList>
    </citation>
    <scope>NUCLEOTIDE SEQUENCE [LARGE SCALE GENOMIC DNA]</scope>
    <source>
        <strain>ATCC 2001 / BCRC 20586 / JCM 3761 / NBRC 0622 / NRRL Y-65 / CBS 138</strain>
    </source>
</reference>
<sequence length="249" mass="27775">MGYYDIDDILVDSTEVPCKFNYEIPGLGYLENNPGKPIRKNTKLSLPLWLARVLAIVGADSQEQEDMDPNAEEEDGGDAFVELLTPDMFSNKVINAIKTDPKSLDLHAINPYFLDMALKWIALYSDKDLGEIVYELLLERAQQINNYASSVSIDTEYGNKYRSALLDALRLQQNSANEDRSGPLASINGTSSLTTRSANNSGIGSSVGTSQATNLAASTRFLLKLDEFERQLYKDTHDSYRDTKKWVSK</sequence>
<gene>
    <name type="primary">PSF3</name>
    <name type="ordered locus">CAGL0D02596g</name>
</gene>
<organism>
    <name type="scientific">Candida glabrata (strain ATCC 2001 / BCRC 20586 / JCM 3761 / NBRC 0622 / NRRL Y-65 / CBS 138)</name>
    <name type="common">Yeast</name>
    <name type="synonym">Nakaseomyces glabratus</name>
    <dbReference type="NCBI Taxonomy" id="284593"/>
    <lineage>
        <taxon>Eukaryota</taxon>
        <taxon>Fungi</taxon>
        <taxon>Dikarya</taxon>
        <taxon>Ascomycota</taxon>
        <taxon>Saccharomycotina</taxon>
        <taxon>Saccharomycetes</taxon>
        <taxon>Saccharomycetales</taxon>
        <taxon>Saccharomycetaceae</taxon>
        <taxon>Nakaseomyces</taxon>
    </lineage>
</organism>
<dbReference type="EMBL" id="CR380950">
    <property type="protein sequence ID" value="CAG58439.1"/>
    <property type="molecule type" value="Genomic_DNA"/>
</dbReference>
<dbReference type="RefSeq" id="XP_445528.1">
    <property type="nucleotide sequence ID" value="XM_445528.1"/>
</dbReference>
<dbReference type="SMR" id="Q6FW66"/>
<dbReference type="FunCoup" id="Q6FW66">
    <property type="interactions" value="427"/>
</dbReference>
<dbReference type="STRING" id="284593.Q6FW66"/>
<dbReference type="EnsemblFungi" id="CAGL0D02596g-T">
    <property type="protein sequence ID" value="CAGL0D02596g-T-p1"/>
    <property type="gene ID" value="CAGL0D02596g"/>
</dbReference>
<dbReference type="KEGG" id="cgr:2887042"/>
<dbReference type="CGD" id="CAL0128027">
    <property type="gene designation" value="CAGL0D02596g"/>
</dbReference>
<dbReference type="VEuPathDB" id="FungiDB:CAGL0D02596g"/>
<dbReference type="eggNOG" id="KOG1106">
    <property type="taxonomic scope" value="Eukaryota"/>
</dbReference>
<dbReference type="HOGENOM" id="CLU_081646_0_1_1"/>
<dbReference type="InParanoid" id="Q6FW66"/>
<dbReference type="OMA" id="SANEDRS"/>
<dbReference type="Proteomes" id="UP000002428">
    <property type="component" value="Chromosome D"/>
</dbReference>
<dbReference type="GO" id="GO:0071162">
    <property type="term" value="C:CMG complex"/>
    <property type="evidence" value="ECO:0007669"/>
    <property type="project" value="EnsemblFungi"/>
</dbReference>
<dbReference type="GO" id="GO:0000811">
    <property type="term" value="C:GINS complex"/>
    <property type="evidence" value="ECO:0007669"/>
    <property type="project" value="EnsemblFungi"/>
</dbReference>
<dbReference type="GO" id="GO:0043596">
    <property type="term" value="C:nuclear replication fork"/>
    <property type="evidence" value="ECO:0007669"/>
    <property type="project" value="EnsemblFungi"/>
</dbReference>
<dbReference type="GO" id="GO:0000727">
    <property type="term" value="P:double-strand break repair via break-induced replication"/>
    <property type="evidence" value="ECO:0007669"/>
    <property type="project" value="EnsemblFungi"/>
</dbReference>
<dbReference type="GO" id="GO:1902975">
    <property type="term" value="P:mitotic DNA replication initiation"/>
    <property type="evidence" value="ECO:0007669"/>
    <property type="project" value="TreeGrafter"/>
</dbReference>
<dbReference type="CDD" id="cd11713">
    <property type="entry name" value="GINS_A_psf3"/>
    <property type="match status" value="1"/>
</dbReference>
<dbReference type="CDD" id="cd21693">
    <property type="entry name" value="GINS_B_Psf3"/>
    <property type="match status" value="1"/>
</dbReference>
<dbReference type="Gene3D" id="1.20.58.2050">
    <property type="match status" value="1"/>
</dbReference>
<dbReference type="InterPro" id="IPR021151">
    <property type="entry name" value="GINS_A"/>
</dbReference>
<dbReference type="InterPro" id="IPR036224">
    <property type="entry name" value="GINS_bundle-like_dom_sf"/>
</dbReference>
<dbReference type="InterPro" id="IPR010492">
    <property type="entry name" value="GINS_Psf3"/>
</dbReference>
<dbReference type="InterPro" id="IPR038437">
    <property type="entry name" value="GINS_Psf3_sf"/>
</dbReference>
<dbReference type="InterPro" id="IPR055221">
    <property type="entry name" value="PSF3_N"/>
</dbReference>
<dbReference type="PANTHER" id="PTHR22768">
    <property type="entry name" value="DNA REPLICATION COMPLEX GINS PROTEIN PSF3"/>
    <property type="match status" value="1"/>
</dbReference>
<dbReference type="PANTHER" id="PTHR22768:SF0">
    <property type="entry name" value="DNA REPLICATION COMPLEX GINS PROTEIN PSF3"/>
    <property type="match status" value="1"/>
</dbReference>
<dbReference type="Pfam" id="PF22466">
    <property type="entry name" value="PSF3_N"/>
    <property type="match status" value="1"/>
</dbReference>
<dbReference type="Pfam" id="PF05916">
    <property type="entry name" value="Sld5"/>
    <property type="match status" value="1"/>
</dbReference>
<dbReference type="SUPFAM" id="SSF158573">
    <property type="entry name" value="GINS helical bundle-like"/>
    <property type="match status" value="2"/>
</dbReference>
<dbReference type="SUPFAM" id="SSF160059">
    <property type="entry name" value="PriA/YqbF domain"/>
    <property type="match status" value="1"/>
</dbReference>
<name>PSF3_CANGA</name>
<accession>Q6FW66</accession>
<feature type="chain" id="PRO_0000278417" description="DNA replication complex GINS protein PSF3">
    <location>
        <begin position="1"/>
        <end position="249"/>
    </location>
</feature>
<feature type="region of interest" description="Disordered" evidence="2">
    <location>
        <begin position="177"/>
        <end position="209"/>
    </location>
</feature>
<feature type="compositionally biased region" description="Polar residues" evidence="2">
    <location>
        <begin position="187"/>
        <end position="209"/>
    </location>
</feature>
<protein>
    <recommendedName>
        <fullName>DNA replication complex GINS protein PSF3</fullName>
    </recommendedName>
</protein>
<comment type="function">
    <text evidence="1">The GINS complex plays an essential role in the initiation of DNA replication.</text>
</comment>
<comment type="subunit">
    <text evidence="1">Component of the GINS complex which is a heterotetramer of SLD5, PSF1, PSF2 and PSF3.</text>
</comment>
<comment type="subcellular location">
    <subcellularLocation>
        <location evidence="1">Nucleus</location>
    </subcellularLocation>
</comment>
<comment type="similarity">
    <text evidence="3">Belongs to the GINS3/PSF3 family.</text>
</comment>
<keyword id="KW-0235">DNA replication</keyword>
<keyword id="KW-0539">Nucleus</keyword>
<keyword id="KW-1185">Reference proteome</keyword>
<proteinExistence type="inferred from homology"/>